<organism>
    <name type="scientific">Procavia capensis habessinica</name>
    <name type="common">Abyssinian hyrax</name>
    <dbReference type="NCBI Taxonomy" id="9814"/>
    <lineage>
        <taxon>Eukaryota</taxon>
        <taxon>Metazoa</taxon>
        <taxon>Chordata</taxon>
        <taxon>Craniata</taxon>
        <taxon>Vertebrata</taxon>
        <taxon>Euteleostomi</taxon>
        <taxon>Mammalia</taxon>
        <taxon>Eutheria</taxon>
        <taxon>Afrotheria</taxon>
        <taxon>Hyracoidea</taxon>
        <taxon>Procaviidae</taxon>
        <taxon>Procavia</taxon>
    </lineage>
</organism>
<dbReference type="PIR" id="A02402">
    <property type="entry name" value="HBHXR"/>
</dbReference>
<dbReference type="SMR" id="P02086"/>
<dbReference type="iPTMnet" id="P02086"/>
<dbReference type="GO" id="GO:0072562">
    <property type="term" value="C:blood microparticle"/>
    <property type="evidence" value="ECO:0007669"/>
    <property type="project" value="TreeGrafter"/>
</dbReference>
<dbReference type="GO" id="GO:0031838">
    <property type="term" value="C:haptoglobin-hemoglobin complex"/>
    <property type="evidence" value="ECO:0007669"/>
    <property type="project" value="TreeGrafter"/>
</dbReference>
<dbReference type="GO" id="GO:0005833">
    <property type="term" value="C:hemoglobin complex"/>
    <property type="evidence" value="ECO:0007669"/>
    <property type="project" value="InterPro"/>
</dbReference>
<dbReference type="GO" id="GO:0031720">
    <property type="term" value="F:haptoglobin binding"/>
    <property type="evidence" value="ECO:0007669"/>
    <property type="project" value="TreeGrafter"/>
</dbReference>
<dbReference type="GO" id="GO:0020037">
    <property type="term" value="F:heme binding"/>
    <property type="evidence" value="ECO:0007669"/>
    <property type="project" value="InterPro"/>
</dbReference>
<dbReference type="GO" id="GO:0031721">
    <property type="term" value="F:hemoglobin alpha binding"/>
    <property type="evidence" value="ECO:0007669"/>
    <property type="project" value="TreeGrafter"/>
</dbReference>
<dbReference type="GO" id="GO:0046872">
    <property type="term" value="F:metal ion binding"/>
    <property type="evidence" value="ECO:0007669"/>
    <property type="project" value="UniProtKB-KW"/>
</dbReference>
<dbReference type="GO" id="GO:0043177">
    <property type="term" value="F:organic acid binding"/>
    <property type="evidence" value="ECO:0007669"/>
    <property type="project" value="TreeGrafter"/>
</dbReference>
<dbReference type="GO" id="GO:0019825">
    <property type="term" value="F:oxygen binding"/>
    <property type="evidence" value="ECO:0007669"/>
    <property type="project" value="InterPro"/>
</dbReference>
<dbReference type="GO" id="GO:0005344">
    <property type="term" value="F:oxygen carrier activity"/>
    <property type="evidence" value="ECO:0007669"/>
    <property type="project" value="UniProtKB-KW"/>
</dbReference>
<dbReference type="GO" id="GO:0004601">
    <property type="term" value="F:peroxidase activity"/>
    <property type="evidence" value="ECO:0007669"/>
    <property type="project" value="TreeGrafter"/>
</dbReference>
<dbReference type="GO" id="GO:0042744">
    <property type="term" value="P:hydrogen peroxide catabolic process"/>
    <property type="evidence" value="ECO:0007669"/>
    <property type="project" value="TreeGrafter"/>
</dbReference>
<dbReference type="CDD" id="cd08925">
    <property type="entry name" value="Hb-beta-like"/>
    <property type="match status" value="1"/>
</dbReference>
<dbReference type="FunFam" id="1.10.490.10:FF:000001">
    <property type="entry name" value="Hemoglobin subunit beta"/>
    <property type="match status" value="1"/>
</dbReference>
<dbReference type="Gene3D" id="1.10.490.10">
    <property type="entry name" value="Globins"/>
    <property type="match status" value="1"/>
</dbReference>
<dbReference type="InterPro" id="IPR000971">
    <property type="entry name" value="Globin"/>
</dbReference>
<dbReference type="InterPro" id="IPR009050">
    <property type="entry name" value="Globin-like_sf"/>
</dbReference>
<dbReference type="InterPro" id="IPR012292">
    <property type="entry name" value="Globin/Proto"/>
</dbReference>
<dbReference type="InterPro" id="IPR002337">
    <property type="entry name" value="Hemoglobin_b"/>
</dbReference>
<dbReference type="InterPro" id="IPR050056">
    <property type="entry name" value="Hemoglobin_oxygen_transport"/>
</dbReference>
<dbReference type="PANTHER" id="PTHR11442">
    <property type="entry name" value="HEMOGLOBIN FAMILY MEMBER"/>
    <property type="match status" value="1"/>
</dbReference>
<dbReference type="PANTHER" id="PTHR11442:SF42">
    <property type="entry name" value="HEMOGLOBIN SUBUNIT BETA"/>
    <property type="match status" value="1"/>
</dbReference>
<dbReference type="Pfam" id="PF00042">
    <property type="entry name" value="Globin"/>
    <property type="match status" value="1"/>
</dbReference>
<dbReference type="PRINTS" id="PR00814">
    <property type="entry name" value="BETAHAEM"/>
</dbReference>
<dbReference type="SUPFAM" id="SSF46458">
    <property type="entry name" value="Globin-like"/>
    <property type="match status" value="1"/>
</dbReference>
<dbReference type="PROSITE" id="PS01033">
    <property type="entry name" value="GLOBIN"/>
    <property type="match status" value="1"/>
</dbReference>
<keyword id="KW-0007">Acetylation</keyword>
<keyword id="KW-0903">Direct protein sequencing</keyword>
<keyword id="KW-0349">Heme</keyword>
<keyword id="KW-0408">Iron</keyword>
<keyword id="KW-0479">Metal-binding</keyword>
<keyword id="KW-0561">Oxygen transport</keyword>
<keyword id="KW-0597">Phosphoprotein</keyword>
<keyword id="KW-0702">S-nitrosylation</keyword>
<keyword id="KW-0813">Transport</keyword>
<proteinExistence type="evidence at protein level"/>
<name>HBB_PROHA</name>
<reference key="1">
    <citation type="journal article" date="1983" name="Hoppe-Seyler's Z. Physiol. Chem.">
        <title>The primary structure of hemoglobins of the rock hyrax (Procavia habessinica, Hyracoidea): insertion of glutamine in the alpha chains.</title>
        <authorList>
            <person name="Kleinschmidt T."/>
            <person name="Braunitzer G."/>
        </authorList>
    </citation>
    <scope>PROTEIN SEQUENCE</scope>
    <scope>ACETYLATION AT VAL-1</scope>
</reference>
<sequence>VHLTDAEKAAVTGLWGKVKVDEYGGEALGRLLVVYPWTQRFFEHFGDLSNADAIMHNPKVLAHGKKVLSSFGDGLNHLDNLKGTFAQLSELHCDKLHVDPENFRLLGNVLVVVLARHFHEEFTPDVQAAFQKVVTGVANALAHKYH</sequence>
<gene>
    <name type="primary">HBB</name>
</gene>
<accession>P02086</accession>
<comment type="function">
    <text>Involved in oxygen transport from the lung to the various peripheral tissues.</text>
</comment>
<comment type="subunit">
    <text>Heterotetramer of two alpha chains and two beta chains.</text>
</comment>
<comment type="tissue specificity">
    <text>Red blood cells.</text>
</comment>
<comment type="similarity">
    <text evidence="2">Belongs to the globin family.</text>
</comment>
<feature type="chain" id="PRO_0000053077" description="Hemoglobin subunit beta">
    <location>
        <begin position="1"/>
        <end position="146"/>
    </location>
</feature>
<feature type="domain" description="Globin" evidence="2">
    <location>
        <begin position="2"/>
        <end position="146"/>
    </location>
</feature>
<feature type="binding site" description="distal binding residue">
    <location>
        <position position="63"/>
    </location>
    <ligand>
        <name>heme b</name>
        <dbReference type="ChEBI" id="CHEBI:60344"/>
    </ligand>
    <ligandPart>
        <name>Fe</name>
        <dbReference type="ChEBI" id="CHEBI:18248"/>
    </ligandPart>
</feature>
<feature type="binding site" description="proximal binding residue">
    <location>
        <position position="92"/>
    </location>
    <ligand>
        <name>heme b</name>
        <dbReference type="ChEBI" id="CHEBI:60344"/>
    </ligand>
    <ligandPart>
        <name>Fe</name>
        <dbReference type="ChEBI" id="CHEBI:18248"/>
    </ligandPart>
</feature>
<feature type="modified residue" description="N-acetylvaline; partial" evidence="3">
    <location>
        <position position="1"/>
    </location>
</feature>
<feature type="modified residue" description="Phosphothreonine" evidence="1">
    <location>
        <position position="12"/>
    </location>
</feature>
<feature type="modified residue" description="N6-acetyllysine" evidence="1">
    <location>
        <position position="59"/>
    </location>
</feature>
<feature type="modified residue" description="N6-acetyllysine" evidence="1">
    <location>
        <position position="82"/>
    </location>
</feature>
<feature type="modified residue" description="S-nitrosocysteine" evidence="1">
    <location>
        <position position="93"/>
    </location>
</feature>
<feature type="modified residue" description="N6-acetyllysine" evidence="1">
    <location>
        <position position="144"/>
    </location>
</feature>
<evidence type="ECO:0000250" key="1">
    <source>
        <dbReference type="UniProtKB" id="P68871"/>
    </source>
</evidence>
<evidence type="ECO:0000255" key="2">
    <source>
        <dbReference type="PROSITE-ProRule" id="PRU00238"/>
    </source>
</evidence>
<evidence type="ECO:0000269" key="3">
    <source>
    </source>
</evidence>
<protein>
    <recommendedName>
        <fullName>Hemoglobin subunit beta</fullName>
    </recommendedName>
    <alternativeName>
        <fullName>Beta-globin</fullName>
    </alternativeName>
    <alternativeName>
        <fullName>Hemoglobin beta chain</fullName>
    </alternativeName>
</protein>